<feature type="chain" id="PRO_0000107108" description="Uncharacterized protein MJ0923">
    <location>
        <begin position="1"/>
        <end position="297"/>
    </location>
</feature>
<feature type="transmembrane region" description="Helical" evidence="1">
    <location>
        <begin position="14"/>
        <end position="34"/>
    </location>
</feature>
<feature type="transmembrane region" description="Helical" evidence="1">
    <location>
        <begin position="55"/>
        <end position="75"/>
    </location>
</feature>
<feature type="transmembrane region" description="Helical" evidence="1">
    <location>
        <begin position="81"/>
        <end position="101"/>
    </location>
</feature>
<feature type="transmembrane region" description="Helical" evidence="1">
    <location>
        <begin position="110"/>
        <end position="130"/>
    </location>
</feature>
<feature type="transmembrane region" description="Helical" evidence="1">
    <location>
        <begin position="135"/>
        <end position="155"/>
    </location>
</feature>
<feature type="transmembrane region" description="Helical" evidence="1">
    <location>
        <begin position="163"/>
        <end position="183"/>
    </location>
</feature>
<feature type="transmembrane region" description="Helical" evidence="1">
    <location>
        <begin position="208"/>
        <end position="228"/>
    </location>
</feature>
<dbReference type="EMBL" id="L77117">
    <property type="protein sequence ID" value="AAB98936.1"/>
    <property type="molecule type" value="Genomic_DNA"/>
</dbReference>
<dbReference type="PIR" id="C64415">
    <property type="entry name" value="C64415"/>
</dbReference>
<dbReference type="RefSeq" id="WP_010870437.1">
    <property type="nucleotide sequence ID" value="NC_000909.1"/>
</dbReference>
<dbReference type="PaxDb" id="243232-MJ_0923"/>
<dbReference type="EnsemblBacteria" id="AAB98936">
    <property type="protein sequence ID" value="AAB98936"/>
    <property type="gene ID" value="MJ_0923"/>
</dbReference>
<dbReference type="GeneID" id="1451812"/>
<dbReference type="KEGG" id="mja:MJ_0923"/>
<dbReference type="eggNOG" id="arCOG06562">
    <property type="taxonomic scope" value="Archaea"/>
</dbReference>
<dbReference type="HOGENOM" id="CLU_938808_0_0_2"/>
<dbReference type="InParanoid" id="Q58333"/>
<dbReference type="OrthoDB" id="65647at2157"/>
<dbReference type="Proteomes" id="UP000000805">
    <property type="component" value="Chromosome"/>
</dbReference>
<dbReference type="GO" id="GO:0005886">
    <property type="term" value="C:plasma membrane"/>
    <property type="evidence" value="ECO:0007669"/>
    <property type="project" value="UniProtKB-SubCell"/>
</dbReference>
<sequence length="297" mass="34083">MEIFKLLRKDRKMLFLMFIGTVSFLFIFIPFLKFQMIGSSHKINAYPSLSAVCGLLLGPIYGFFAVMLVTLIYFFLNPKAFYFGIYSLIPPTLAVISAGALSEGKWKYSAIILIVGLLLFYLTDVGRVAFYYPYLSTLALLLILIFREKISKLLFSKDWKKMIVGATILSFSSVMTDHLYGSILGIVYLHLPAEDYISVIPLFIKERLIMTVIGAFFVIFAIEISKCFLKNATKLKEKLLKSYIDKEIKINCKNMLNVDEELLKKYNVKIPSEEEQKEILKTLVEVVVFNNDKDENR</sequence>
<name>Y923_METJA</name>
<reference key="1">
    <citation type="journal article" date="1996" name="Science">
        <title>Complete genome sequence of the methanogenic archaeon, Methanococcus jannaschii.</title>
        <authorList>
            <person name="Bult C.J."/>
            <person name="White O."/>
            <person name="Olsen G.J."/>
            <person name="Zhou L."/>
            <person name="Fleischmann R.D."/>
            <person name="Sutton G.G."/>
            <person name="Blake J.A."/>
            <person name="FitzGerald L.M."/>
            <person name="Clayton R.A."/>
            <person name="Gocayne J.D."/>
            <person name="Kerlavage A.R."/>
            <person name="Dougherty B.A."/>
            <person name="Tomb J.-F."/>
            <person name="Adams M.D."/>
            <person name="Reich C.I."/>
            <person name="Overbeek R."/>
            <person name="Kirkness E.F."/>
            <person name="Weinstock K.G."/>
            <person name="Merrick J.M."/>
            <person name="Glodek A."/>
            <person name="Scott J.L."/>
            <person name="Geoghagen N.S.M."/>
            <person name="Weidman J.F."/>
            <person name="Fuhrmann J.L."/>
            <person name="Nguyen D."/>
            <person name="Utterback T.R."/>
            <person name="Kelley J.M."/>
            <person name="Peterson J.D."/>
            <person name="Sadow P.W."/>
            <person name="Hanna M.C."/>
            <person name="Cotton M.D."/>
            <person name="Roberts K.M."/>
            <person name="Hurst M.A."/>
            <person name="Kaine B.P."/>
            <person name="Borodovsky M."/>
            <person name="Klenk H.-P."/>
            <person name="Fraser C.M."/>
            <person name="Smith H.O."/>
            <person name="Woese C.R."/>
            <person name="Venter J.C."/>
        </authorList>
    </citation>
    <scope>NUCLEOTIDE SEQUENCE [LARGE SCALE GENOMIC DNA]</scope>
    <source>
        <strain>ATCC 43067 / DSM 2661 / JAL-1 / JCM 10045 / NBRC 100440</strain>
    </source>
</reference>
<keyword id="KW-1003">Cell membrane</keyword>
<keyword id="KW-0472">Membrane</keyword>
<keyword id="KW-1185">Reference proteome</keyword>
<keyword id="KW-0812">Transmembrane</keyword>
<keyword id="KW-1133">Transmembrane helix</keyword>
<comment type="subcellular location">
    <subcellularLocation>
        <location evidence="2">Cell membrane</location>
        <topology evidence="2">Multi-pass membrane protein</topology>
    </subcellularLocation>
</comment>
<protein>
    <recommendedName>
        <fullName>Uncharacterized protein MJ0923</fullName>
    </recommendedName>
</protein>
<gene>
    <name type="ordered locus">MJ0923</name>
</gene>
<proteinExistence type="predicted"/>
<evidence type="ECO:0000255" key="1"/>
<evidence type="ECO:0000305" key="2"/>
<accession>Q58333</accession>
<organism>
    <name type="scientific">Methanocaldococcus jannaschii (strain ATCC 43067 / DSM 2661 / JAL-1 / JCM 10045 / NBRC 100440)</name>
    <name type="common">Methanococcus jannaschii</name>
    <dbReference type="NCBI Taxonomy" id="243232"/>
    <lineage>
        <taxon>Archaea</taxon>
        <taxon>Methanobacteriati</taxon>
        <taxon>Methanobacteriota</taxon>
        <taxon>Methanomada group</taxon>
        <taxon>Methanococci</taxon>
        <taxon>Methanococcales</taxon>
        <taxon>Methanocaldococcaceae</taxon>
        <taxon>Methanocaldococcus</taxon>
    </lineage>
</organism>